<organism>
    <name type="scientific">Ganoderma lucidum</name>
    <name type="common">Ling zhi medicinal fungus</name>
    <name type="synonym">Bracket fungus</name>
    <dbReference type="NCBI Taxonomy" id="5315"/>
    <lineage>
        <taxon>Eukaryota</taxon>
        <taxon>Fungi</taxon>
        <taxon>Dikarya</taxon>
        <taxon>Basidiomycota</taxon>
        <taxon>Agaricomycotina</taxon>
        <taxon>Agaricomycetes</taxon>
        <taxon>Polyporales</taxon>
        <taxon>Polyporaceae</taxon>
        <taxon>Ganoderma</taxon>
    </lineage>
</organism>
<keyword id="KW-0808">Transferase</keyword>
<comment type="function">
    <text evidence="1 2 3 9">Squalene synthase; part of the third module of ergosterol biosynthesis pathway that includes the late steps of the pathway (By similarity). The third module or late pathway involves the ergosterol synthesis itself through consecutive reactions that mainly occur in the endoplasmic reticulum (ER) membrane (By similarity). Firstly, the squalene synthase SQS catalyzes the condensation of 2 farnesyl pyrophosphate moieties to form squalene, which is the precursor of all steroids (PubMed:18051320). Secondly, the squalene epoxidase catalyzes the stereospecific oxidation of squalene to (S)-2,3-epoxysqualene, which is considered to be a rate-limiting enzyme in steroid biosynthesis (By similarity). Then, the lanosterol synthase LS catalyzes the cyclization of (S)-2,3 oxidosqualene to lanosterol, a reaction that forms the sterol core (PubMed:20460708). In the next steps, lanosterol is transformed to ergosterol via a complex process involving various demethylation, reduction and desaturation reactions (By similarity). Lanosterol is also an intermediate in the biosynthesis of triterpenes such as ganoderic acids (GA), a group of highly oxygenated lanostane-type triterpenoids which are well recognized as a main group of unique bioactive compounds in the medicinal mushroom Ganoderma lucidum (Probable).</text>
</comment>
<comment type="catalytic activity">
    <reaction evidence="8">
        <text>2 (2E,6E)-farnesyl diphosphate + NADPH + H(+) = squalene + 2 diphosphate + NADP(+)</text>
        <dbReference type="Rhea" id="RHEA:32295"/>
        <dbReference type="ChEBI" id="CHEBI:15378"/>
        <dbReference type="ChEBI" id="CHEBI:15440"/>
        <dbReference type="ChEBI" id="CHEBI:33019"/>
        <dbReference type="ChEBI" id="CHEBI:57783"/>
        <dbReference type="ChEBI" id="CHEBI:58349"/>
        <dbReference type="ChEBI" id="CHEBI:175763"/>
        <dbReference type="EC" id="2.5.1.21"/>
    </reaction>
    <physiologicalReaction direction="left-to-right" evidence="8">
        <dbReference type="Rhea" id="RHEA:32296"/>
    </physiologicalReaction>
</comment>
<comment type="catalytic activity">
    <reaction evidence="8">
        <text>2 (2E,6E)-farnesyl diphosphate + NADH + H(+) = squalene + 2 diphosphate + NAD(+)</text>
        <dbReference type="Rhea" id="RHEA:32299"/>
        <dbReference type="ChEBI" id="CHEBI:15378"/>
        <dbReference type="ChEBI" id="CHEBI:15440"/>
        <dbReference type="ChEBI" id="CHEBI:33019"/>
        <dbReference type="ChEBI" id="CHEBI:57540"/>
        <dbReference type="ChEBI" id="CHEBI:57945"/>
        <dbReference type="ChEBI" id="CHEBI:175763"/>
        <dbReference type="EC" id="2.5.1.21"/>
    </reaction>
    <physiologicalReaction direction="left-to-right" evidence="8">
        <dbReference type="Rhea" id="RHEA:32300"/>
    </physiologicalReaction>
</comment>
<comment type="cofactor">
    <cofactor evidence="1">
        <name>Mg(2+)</name>
        <dbReference type="ChEBI" id="CHEBI:18420"/>
    </cofactor>
</comment>
<comment type="pathway">
    <text evidence="1">Terpene metabolism; lanosterol biosynthesis; lanosterol from farnesyl diphosphate: step 1/3.</text>
</comment>
<comment type="developmental stage">
    <text evidence="5">Expression is relatively low in mycelia and reaches the highest level in the primordia.</text>
</comment>
<comment type="induction">
    <text evidence="4">Expression is induced in ganoderic acid (GA) producing conditions.</text>
</comment>
<comment type="similarity">
    <text evidence="7">Belongs to the phytoene/squalene synthase family.</text>
</comment>
<gene>
    <name evidence="6" type="primary">SQS</name>
</gene>
<feature type="chain" id="PRO_0000454393" description="Squalene synthase">
    <location>
        <begin position="1"/>
        <end position="467"/>
    </location>
</feature>
<accession>A0SJQ5</accession>
<proteinExistence type="evidence at transcript level"/>
<name>ERG9_GANLU</name>
<sequence length="467" mass="54018">MGATSMLTLLLTHPFEFRVLIQYKLWHEPKRDITQVSEHPTSGWDRPTMRRCWEFLDQTSRSFSGVIKEVEGDLARVICLFYLVLRGLDTIEDDMTLPDEKKQPILRQFHKLAVKPGWTFDECGPKEKDRQLLVEWTVVSEELNRLDACYRDIIIDIAEKMQTGMADYAHKAATTNSIYIGTVDEYNLYCHYVAGLVGEGLTRFWAASGKEAEWLGDQLELTNAMGLMLQKTNIIRDFREDAEERRFFWPREIWGRDAYGKAVGRANGFREMHELYERGNEKQALWVQSGMVVDVLGHATDSLDYLRLLTKQSIFCFCAIPQTMAMATLSLCFMNYDMFHNHIKIRRAEAASLIMRSTNPRDVAYIFRDYARKMHARALPEDPSFLRLSVACGKIEQWCERHYPSFVRLQQVSGGGIVFDPSDARTKVVEAAQARDNELAREKRLAELRDKTGKLERKLRWSQAPSS</sequence>
<evidence type="ECO:0000250" key="1">
    <source>
        <dbReference type="UniProtKB" id="P29704"/>
    </source>
</evidence>
<evidence type="ECO:0000269" key="2">
    <source>
    </source>
</evidence>
<evidence type="ECO:0000269" key="3">
    <source>
    </source>
</evidence>
<evidence type="ECO:0000269" key="4">
    <source>
    </source>
</evidence>
<evidence type="ECO:0000269" key="5">
    <source ref="2"/>
</evidence>
<evidence type="ECO:0000303" key="6">
    <source>
    </source>
</evidence>
<evidence type="ECO:0000305" key="7"/>
<evidence type="ECO:0000305" key="8">
    <source>
    </source>
</evidence>
<evidence type="ECO:0000305" key="9">
    <source>
    </source>
</evidence>
<protein>
    <recommendedName>
        <fullName evidence="6">Squalene synthase</fullName>
        <shortName evidence="6">SQS</shortName>
        <shortName evidence="1">SS</shortName>
        <ecNumber evidence="8">2.5.1.21</ecNumber>
    </recommendedName>
    <alternativeName>
        <fullName evidence="1">FPP:FPP farnesyltransferase</fullName>
    </alternativeName>
    <alternativeName>
        <fullName evidence="1">Farnesyl-diphosphate farnesyltransferase</fullName>
    </alternativeName>
</protein>
<reference key="1">
    <citation type="journal article" date="2007" name="J. Microbiol. Biotechnol.">
        <title>Cloning and characterization of squalene synthase (SQS) gene from Ganoderma lucidum.</title>
        <authorList>
            <person name="Zhao M.W."/>
            <person name="Liang W.Q."/>
            <person name="Zhang D.B."/>
            <person name="Wang N."/>
            <person name="Wang C.G."/>
            <person name="Pan Y.J."/>
        </authorList>
    </citation>
    <scope>NUCLEOTIDE SEQUENCE [GENOMIC DNA / MRNA]</scope>
    <scope>FUNCTION</scope>
</reference>
<reference key="2">
    <citation type="journal article" date="2004" name="J. Microbiol. Biotechnol.">
        <title>Analysis of squalene synthase expression during the development of Ganoderma lucidum.</title>
        <authorList>
            <person name="Zhao M."/>
            <person name="Zhong J."/>
            <person name="Liang W."/>
        </authorList>
    </citation>
    <scope>DEVELOPMENTAL STAGE</scope>
</reference>
<reference key="3">
    <citation type="journal article" date="2010" name="Biosci. Biotechnol. Biochem.">
        <title>Molecular cloning, characterization, and differential expression of a lanosterol synthase gene from Ganoderma lucidum.</title>
        <authorList>
            <person name="Shang C.H."/>
            <person name="Shi L."/>
            <person name="Ren A."/>
            <person name="Qin L."/>
            <person name="Zhao M.W."/>
        </authorList>
    </citation>
    <scope>FUNCTION</scope>
</reference>
<reference key="4">
    <citation type="journal article" date="2018" name="Biotechnol. Bioeng.">
        <title>Biosynthesis of a ganoderic acid in Saccharomyces cerevisiae by expressing a cytochrome P450 gene from Ganoderma lucidum.</title>
        <authorList>
            <person name="Wang W.F."/>
            <person name="Xiao H."/>
            <person name="Zhong J.J."/>
        </authorList>
    </citation>
    <scope>FUNCTION</scope>
</reference>
<reference key="5">
    <citation type="journal article" date="2019" name="Microb. Biotechnol.">
        <title>Enhanced production of individual ganoderic acids by integrating Vitreoscilla haemoglobin expression and calcium ion induction in liquid static cultures of Ganoderma lingzhi.</title>
        <authorList>
            <person name="Xu J.W."/>
            <person name="Yue T.H."/>
            <person name="Yu X."/>
            <person name="Zhao P."/>
            <person name="Li T."/>
            <person name="Li N."/>
        </authorList>
    </citation>
    <scope>INDUCTION</scope>
</reference>
<dbReference type="EC" id="2.5.1.21" evidence="8"/>
<dbReference type="EMBL" id="DQ494674">
    <property type="protein sequence ID" value="ABF57213.1"/>
    <property type="molecule type" value="mRNA"/>
</dbReference>
<dbReference type="EMBL" id="DQ494675">
    <property type="protein sequence ID" value="ABF57214.1"/>
    <property type="molecule type" value="Genomic_DNA"/>
</dbReference>
<dbReference type="SMR" id="A0SJQ5"/>
<dbReference type="BRENDA" id="2.5.1.21">
    <property type="organism ID" value="2399"/>
</dbReference>
<dbReference type="UniPathway" id="UPA00767">
    <property type="reaction ID" value="UER00751"/>
</dbReference>
<dbReference type="GO" id="GO:0005789">
    <property type="term" value="C:endoplasmic reticulum membrane"/>
    <property type="evidence" value="ECO:0007669"/>
    <property type="project" value="TreeGrafter"/>
</dbReference>
<dbReference type="GO" id="GO:0051996">
    <property type="term" value="F:squalene synthase [NAD(P)H] activity"/>
    <property type="evidence" value="ECO:0007669"/>
    <property type="project" value="UniProtKB-EC"/>
</dbReference>
<dbReference type="GO" id="GO:0006696">
    <property type="term" value="P:ergosterol biosynthetic process"/>
    <property type="evidence" value="ECO:0007669"/>
    <property type="project" value="TreeGrafter"/>
</dbReference>
<dbReference type="GO" id="GO:0045338">
    <property type="term" value="P:farnesyl diphosphate metabolic process"/>
    <property type="evidence" value="ECO:0007669"/>
    <property type="project" value="InterPro"/>
</dbReference>
<dbReference type="CDD" id="cd00683">
    <property type="entry name" value="Trans_IPPS_HH"/>
    <property type="match status" value="1"/>
</dbReference>
<dbReference type="FunFam" id="1.10.600.10:FF:000023">
    <property type="entry name" value="Squalene synthase"/>
    <property type="match status" value="1"/>
</dbReference>
<dbReference type="Gene3D" id="1.10.600.10">
    <property type="entry name" value="Farnesyl Diphosphate Synthase"/>
    <property type="match status" value="1"/>
</dbReference>
<dbReference type="InterPro" id="IPR008949">
    <property type="entry name" value="Isoprenoid_synthase_dom_sf"/>
</dbReference>
<dbReference type="InterPro" id="IPR002060">
    <property type="entry name" value="Squ/phyt_synthse"/>
</dbReference>
<dbReference type="InterPro" id="IPR006449">
    <property type="entry name" value="Squal_synth-like"/>
</dbReference>
<dbReference type="InterPro" id="IPR019845">
    <property type="entry name" value="Squalene/phytoene_synthase_CS"/>
</dbReference>
<dbReference type="InterPro" id="IPR044844">
    <property type="entry name" value="Trans_IPPS_euk-type"/>
</dbReference>
<dbReference type="InterPro" id="IPR033904">
    <property type="entry name" value="Trans_IPPS_HH"/>
</dbReference>
<dbReference type="NCBIfam" id="TIGR01559">
    <property type="entry name" value="squal_synth"/>
    <property type="match status" value="1"/>
</dbReference>
<dbReference type="PANTHER" id="PTHR11626">
    <property type="entry name" value="FARNESYL-DIPHOSPHATE FARNESYLTRANSFERASE"/>
    <property type="match status" value="1"/>
</dbReference>
<dbReference type="PANTHER" id="PTHR11626:SF2">
    <property type="entry name" value="SQUALENE SYNTHASE"/>
    <property type="match status" value="1"/>
</dbReference>
<dbReference type="Pfam" id="PF00494">
    <property type="entry name" value="SQS_PSY"/>
    <property type="match status" value="1"/>
</dbReference>
<dbReference type="SFLD" id="SFLDS00005">
    <property type="entry name" value="Isoprenoid_Synthase_Type_I"/>
    <property type="match status" value="1"/>
</dbReference>
<dbReference type="SFLD" id="SFLDG01018">
    <property type="entry name" value="Squalene/Phytoene_Synthase_Lik"/>
    <property type="match status" value="1"/>
</dbReference>
<dbReference type="SUPFAM" id="SSF48576">
    <property type="entry name" value="Terpenoid synthases"/>
    <property type="match status" value="1"/>
</dbReference>
<dbReference type="PROSITE" id="PS01045">
    <property type="entry name" value="SQUALEN_PHYTOEN_SYN_2"/>
    <property type="match status" value="1"/>
</dbReference>